<name>RL13_THEKO</name>
<proteinExistence type="evidence at protein level"/>
<dbReference type="EMBL" id="AP006878">
    <property type="protein sequence ID" value="BAD85690.1"/>
    <property type="molecule type" value="Genomic_DNA"/>
</dbReference>
<dbReference type="RefSeq" id="WP_011250452.1">
    <property type="nucleotide sequence ID" value="NC_006624.1"/>
</dbReference>
<dbReference type="PDB" id="6SKF">
    <property type="method" value="EM"/>
    <property type="resolution" value="2.95 A"/>
    <property type="chains" value="BK=1-142"/>
</dbReference>
<dbReference type="PDB" id="6SKG">
    <property type="method" value="EM"/>
    <property type="resolution" value="2.65 A"/>
    <property type="chains" value="BK=1-142"/>
</dbReference>
<dbReference type="PDB" id="6TH6">
    <property type="method" value="EM"/>
    <property type="resolution" value="2.55 A"/>
    <property type="chains" value="BK=1-142"/>
</dbReference>
<dbReference type="PDBsum" id="6SKF"/>
<dbReference type="PDBsum" id="6SKG"/>
<dbReference type="PDBsum" id="6TH6"/>
<dbReference type="EMDB" id="EMD-10223"/>
<dbReference type="EMDB" id="EMD-10224"/>
<dbReference type="EMDB" id="EMD-10503"/>
<dbReference type="SMR" id="Q5JJF6"/>
<dbReference type="FunCoup" id="Q5JJF6">
    <property type="interactions" value="139"/>
</dbReference>
<dbReference type="STRING" id="69014.TK1501"/>
<dbReference type="EnsemblBacteria" id="BAD85690">
    <property type="protein sequence ID" value="BAD85690"/>
    <property type="gene ID" value="TK1501"/>
</dbReference>
<dbReference type="GeneID" id="78448027"/>
<dbReference type="KEGG" id="tko:TK1501"/>
<dbReference type="PATRIC" id="fig|69014.16.peg.1461"/>
<dbReference type="eggNOG" id="arCOG04242">
    <property type="taxonomic scope" value="Archaea"/>
</dbReference>
<dbReference type="HOGENOM" id="CLU_076922_1_0_2"/>
<dbReference type="InParanoid" id="Q5JJF6"/>
<dbReference type="OrthoDB" id="7668at2157"/>
<dbReference type="PhylomeDB" id="Q5JJF6"/>
<dbReference type="Proteomes" id="UP000000536">
    <property type="component" value="Chromosome"/>
</dbReference>
<dbReference type="GO" id="GO:0022625">
    <property type="term" value="C:cytosolic large ribosomal subunit"/>
    <property type="evidence" value="ECO:0000318"/>
    <property type="project" value="GO_Central"/>
</dbReference>
<dbReference type="GO" id="GO:0005840">
    <property type="term" value="C:ribosome"/>
    <property type="evidence" value="ECO:0000318"/>
    <property type="project" value="GO_Central"/>
</dbReference>
<dbReference type="GO" id="GO:0003729">
    <property type="term" value="F:mRNA binding"/>
    <property type="evidence" value="ECO:0000318"/>
    <property type="project" value="GO_Central"/>
</dbReference>
<dbReference type="GO" id="GO:0003735">
    <property type="term" value="F:structural constituent of ribosome"/>
    <property type="evidence" value="ECO:0000318"/>
    <property type="project" value="GO_Central"/>
</dbReference>
<dbReference type="GO" id="GO:0017148">
    <property type="term" value="P:negative regulation of translation"/>
    <property type="evidence" value="ECO:0000318"/>
    <property type="project" value="GO_Central"/>
</dbReference>
<dbReference type="GO" id="GO:0006412">
    <property type="term" value="P:translation"/>
    <property type="evidence" value="ECO:0007669"/>
    <property type="project" value="UniProtKB-UniRule"/>
</dbReference>
<dbReference type="CDD" id="cd00392">
    <property type="entry name" value="Ribosomal_L13"/>
    <property type="match status" value="1"/>
</dbReference>
<dbReference type="FunFam" id="3.90.1180.10:FF:000012">
    <property type="entry name" value="50S ribosomal protein L13"/>
    <property type="match status" value="1"/>
</dbReference>
<dbReference type="Gene3D" id="3.90.1180.10">
    <property type="entry name" value="Ribosomal protein L13"/>
    <property type="match status" value="1"/>
</dbReference>
<dbReference type="HAMAP" id="MF_01366">
    <property type="entry name" value="Ribosomal_uL13"/>
    <property type="match status" value="1"/>
</dbReference>
<dbReference type="InterPro" id="IPR005822">
    <property type="entry name" value="Ribosomal_uL13"/>
</dbReference>
<dbReference type="InterPro" id="IPR005823">
    <property type="entry name" value="Ribosomal_uL13_bac-type"/>
</dbReference>
<dbReference type="InterPro" id="IPR023563">
    <property type="entry name" value="Ribosomal_uL13_CS"/>
</dbReference>
<dbReference type="InterPro" id="IPR005755">
    <property type="entry name" value="Ribosomal_uL13_euk/arc"/>
</dbReference>
<dbReference type="InterPro" id="IPR036899">
    <property type="entry name" value="Ribosomal_uL13_sf"/>
</dbReference>
<dbReference type="NCBIfam" id="TIGR01077">
    <property type="entry name" value="L13_A_E"/>
    <property type="match status" value="1"/>
</dbReference>
<dbReference type="NCBIfam" id="NF005004">
    <property type="entry name" value="PRK06394.1"/>
    <property type="match status" value="1"/>
</dbReference>
<dbReference type="PANTHER" id="PTHR11545:SF3">
    <property type="entry name" value="LARGE RIBOSOMAL SUBUNIT PROTEIN UL13"/>
    <property type="match status" value="1"/>
</dbReference>
<dbReference type="PANTHER" id="PTHR11545">
    <property type="entry name" value="RIBOSOMAL PROTEIN L13"/>
    <property type="match status" value="1"/>
</dbReference>
<dbReference type="Pfam" id="PF00572">
    <property type="entry name" value="Ribosomal_L13"/>
    <property type="match status" value="1"/>
</dbReference>
<dbReference type="PIRSF" id="PIRSF002181">
    <property type="entry name" value="Ribosomal_L13"/>
    <property type="match status" value="1"/>
</dbReference>
<dbReference type="SUPFAM" id="SSF52161">
    <property type="entry name" value="Ribosomal protein L13"/>
    <property type="match status" value="1"/>
</dbReference>
<dbReference type="PROSITE" id="PS00783">
    <property type="entry name" value="RIBOSOMAL_L13"/>
    <property type="match status" value="1"/>
</dbReference>
<accession>Q5JJF6</accession>
<comment type="function">
    <text evidence="1">This protein is one of the early assembly proteins of the 50S ribosomal subunit, although it is not seen to bind rRNA by itself. It is important during the early stages of 50S assembly.</text>
</comment>
<comment type="subunit">
    <text evidence="1 2">Part of the 50S ribosomal subunit.</text>
</comment>
<comment type="similarity">
    <text evidence="1">Belongs to the universal ribosomal protein uL13 family.</text>
</comment>
<feature type="chain" id="PRO_0000261850" description="Large ribosomal subunit protein uL13">
    <location>
        <begin position="1"/>
        <end position="142"/>
    </location>
</feature>
<gene>
    <name evidence="1" type="primary">rpl13</name>
    <name type="ordered locus">TK1501</name>
</gene>
<organism>
    <name type="scientific">Thermococcus kodakarensis (strain ATCC BAA-918 / JCM 12380 / KOD1)</name>
    <name type="common">Pyrococcus kodakaraensis (strain KOD1)</name>
    <dbReference type="NCBI Taxonomy" id="69014"/>
    <lineage>
        <taxon>Archaea</taxon>
        <taxon>Methanobacteriati</taxon>
        <taxon>Methanobacteriota</taxon>
        <taxon>Thermococci</taxon>
        <taxon>Thermococcales</taxon>
        <taxon>Thermococcaceae</taxon>
        <taxon>Thermococcus</taxon>
    </lineage>
</organism>
<protein>
    <recommendedName>
        <fullName evidence="1">Large ribosomal subunit protein uL13</fullName>
    </recommendedName>
    <alternativeName>
        <fullName evidence="3">50S ribosomal protein L13</fullName>
    </alternativeName>
</protein>
<sequence length="142" mass="16284">MRIINAEGLILGRLASKVAKMLLEGEEVVIVNAEKAIITGNREDIFAKYKQRTELRTRTNPRRGPFYPKRSDEIVRRTVRGMLPWKTDRGRKAFKRLKVYVGVPKEFEGKEFETISEAHMSRLATPKYVTVGEVAKFLGGKF</sequence>
<evidence type="ECO:0000255" key="1">
    <source>
        <dbReference type="HAMAP-Rule" id="MF_01366"/>
    </source>
</evidence>
<evidence type="ECO:0000269" key="2">
    <source>
    </source>
</evidence>
<evidence type="ECO:0000305" key="3"/>
<evidence type="ECO:0007744" key="4">
    <source>
        <dbReference type="PDB" id="6SKF"/>
    </source>
</evidence>
<evidence type="ECO:0007744" key="5">
    <source>
        <dbReference type="PDB" id="6SKG"/>
    </source>
</evidence>
<evidence type="ECO:0007744" key="6">
    <source>
        <dbReference type="PDB" id="6TH6"/>
    </source>
</evidence>
<reference key="1">
    <citation type="journal article" date="2005" name="Genome Res.">
        <title>Complete genome sequence of the hyperthermophilic archaeon Thermococcus kodakaraensis KOD1 and comparison with Pyrococcus genomes.</title>
        <authorList>
            <person name="Fukui T."/>
            <person name="Atomi H."/>
            <person name="Kanai T."/>
            <person name="Matsumi R."/>
            <person name="Fujiwara S."/>
            <person name="Imanaka T."/>
        </authorList>
    </citation>
    <scope>NUCLEOTIDE SEQUENCE [LARGE SCALE GENOMIC DNA]</scope>
    <source>
        <strain>ATCC BAA-918 / JCM 12380 / KOD1</strain>
    </source>
</reference>
<reference evidence="4 5 6" key="2">
    <citation type="journal article" date="2020" name="Nature">
        <title>Dynamic RNA acetylation revealed by quantitative cross-evolutionary mapping.</title>
        <authorList>
            <person name="Sas-Chen A."/>
            <person name="Thomas J.M."/>
            <person name="Matzov D."/>
            <person name="Taoka M."/>
            <person name="Nance K.D."/>
            <person name="Nir R."/>
            <person name="Bryson K.M."/>
            <person name="Shachar R."/>
            <person name="Liman G.L.S."/>
            <person name="Burkhart B.W."/>
            <person name="Gamage S.T."/>
            <person name="Nobe Y."/>
            <person name="Briney C.A."/>
            <person name="Levy M.J."/>
            <person name="Fuchs R.T."/>
            <person name="Robb G.B."/>
            <person name="Hartmann J."/>
            <person name="Sharma S."/>
            <person name="Lin Q."/>
            <person name="Florens L."/>
            <person name="Washburn M.P."/>
            <person name="Isobe T."/>
            <person name="Santangelo T.J."/>
            <person name="Shalev-Benami M."/>
            <person name="Meier J.L."/>
            <person name="Schwartz S."/>
        </authorList>
    </citation>
    <scope>STRUCTURE BY ELECTRON MICROSCOPY (2.55 ANGSTROMS) IN 70S RIBOSOME</scope>
    <scope>SUBUNIT</scope>
    <source>
        <strain>ATCC BAA-918 / TS559</strain>
    </source>
</reference>
<keyword id="KW-0002">3D-structure</keyword>
<keyword id="KW-1185">Reference proteome</keyword>
<keyword id="KW-0687">Ribonucleoprotein</keyword>
<keyword id="KW-0689">Ribosomal protein</keyword>